<organism>
    <name type="scientific">Burkholderia pseudomallei (strain K96243)</name>
    <dbReference type="NCBI Taxonomy" id="272560"/>
    <lineage>
        <taxon>Bacteria</taxon>
        <taxon>Pseudomonadati</taxon>
        <taxon>Pseudomonadota</taxon>
        <taxon>Betaproteobacteria</taxon>
        <taxon>Burkholderiales</taxon>
        <taxon>Burkholderiaceae</taxon>
        <taxon>Burkholderia</taxon>
        <taxon>pseudomallei group</taxon>
    </lineage>
</organism>
<feature type="chain" id="PRO_1000077458" description="Protease HtpX homolog">
    <location>
        <begin position="1"/>
        <end position="285"/>
    </location>
</feature>
<feature type="transmembrane region" description="Helical" evidence="1">
    <location>
        <begin position="7"/>
        <end position="27"/>
    </location>
</feature>
<feature type="transmembrane region" description="Helical" evidence="1">
    <location>
        <begin position="30"/>
        <end position="50"/>
    </location>
</feature>
<feature type="transmembrane region" description="Helical" evidence="1">
    <location>
        <begin position="146"/>
        <end position="166"/>
    </location>
</feature>
<feature type="transmembrane region" description="Helical" evidence="1">
    <location>
        <begin position="177"/>
        <end position="197"/>
    </location>
</feature>
<feature type="active site" evidence="1">
    <location>
        <position position="132"/>
    </location>
</feature>
<feature type="binding site" evidence="1">
    <location>
        <position position="131"/>
    </location>
    <ligand>
        <name>Zn(2+)</name>
        <dbReference type="ChEBI" id="CHEBI:29105"/>
        <note>catalytic</note>
    </ligand>
</feature>
<feature type="binding site" evidence="1">
    <location>
        <position position="135"/>
    </location>
    <ligand>
        <name>Zn(2+)</name>
        <dbReference type="ChEBI" id="CHEBI:29105"/>
        <note>catalytic</note>
    </ligand>
</feature>
<feature type="binding site" evidence="1">
    <location>
        <position position="202"/>
    </location>
    <ligand>
        <name>Zn(2+)</name>
        <dbReference type="ChEBI" id="CHEBI:29105"/>
        <note>catalytic</note>
    </ligand>
</feature>
<accession>Q63YR4</accession>
<gene>
    <name evidence="1" type="primary">htpX</name>
    <name type="ordered locus">BPSL0124</name>
</gene>
<dbReference type="EC" id="3.4.24.-" evidence="1"/>
<dbReference type="EMBL" id="BX571965">
    <property type="protein sequence ID" value="CAH34110.1"/>
    <property type="molecule type" value="Genomic_DNA"/>
</dbReference>
<dbReference type="RefSeq" id="WP_004189409.1">
    <property type="nucleotide sequence ID" value="NZ_CP009538.1"/>
</dbReference>
<dbReference type="RefSeq" id="YP_106751.1">
    <property type="nucleotide sequence ID" value="NC_006350.1"/>
</dbReference>
<dbReference type="STRING" id="272560.BPSL0124"/>
<dbReference type="GeneID" id="93058627"/>
<dbReference type="KEGG" id="bps:BPSL0124"/>
<dbReference type="PATRIC" id="fig|272560.51.peg.1599"/>
<dbReference type="eggNOG" id="COG0501">
    <property type="taxonomic scope" value="Bacteria"/>
</dbReference>
<dbReference type="Proteomes" id="UP000000605">
    <property type="component" value="Chromosome 1"/>
</dbReference>
<dbReference type="GO" id="GO:0005886">
    <property type="term" value="C:plasma membrane"/>
    <property type="evidence" value="ECO:0007669"/>
    <property type="project" value="UniProtKB-SubCell"/>
</dbReference>
<dbReference type="GO" id="GO:0004222">
    <property type="term" value="F:metalloendopeptidase activity"/>
    <property type="evidence" value="ECO:0007669"/>
    <property type="project" value="UniProtKB-UniRule"/>
</dbReference>
<dbReference type="GO" id="GO:0008270">
    <property type="term" value="F:zinc ion binding"/>
    <property type="evidence" value="ECO:0007669"/>
    <property type="project" value="UniProtKB-UniRule"/>
</dbReference>
<dbReference type="GO" id="GO:0006508">
    <property type="term" value="P:proteolysis"/>
    <property type="evidence" value="ECO:0007669"/>
    <property type="project" value="UniProtKB-KW"/>
</dbReference>
<dbReference type="CDD" id="cd07336">
    <property type="entry name" value="M48B_HtpX_like"/>
    <property type="match status" value="1"/>
</dbReference>
<dbReference type="Gene3D" id="3.30.2010.10">
    <property type="entry name" value="Metalloproteases ('zincins'), catalytic domain"/>
    <property type="match status" value="1"/>
</dbReference>
<dbReference type="HAMAP" id="MF_00188">
    <property type="entry name" value="Pept_M48_protease_HtpX"/>
    <property type="match status" value="1"/>
</dbReference>
<dbReference type="InterPro" id="IPR050083">
    <property type="entry name" value="HtpX_protease"/>
</dbReference>
<dbReference type="InterPro" id="IPR022919">
    <property type="entry name" value="Pept_M48_protease_HtpX"/>
</dbReference>
<dbReference type="InterPro" id="IPR001915">
    <property type="entry name" value="Peptidase_M48"/>
</dbReference>
<dbReference type="NCBIfam" id="NF002363">
    <property type="entry name" value="PRK01345.1"/>
    <property type="match status" value="1"/>
</dbReference>
<dbReference type="NCBIfam" id="NF002826">
    <property type="entry name" value="PRK03001.1"/>
    <property type="match status" value="1"/>
</dbReference>
<dbReference type="PANTHER" id="PTHR43221">
    <property type="entry name" value="PROTEASE HTPX"/>
    <property type="match status" value="1"/>
</dbReference>
<dbReference type="PANTHER" id="PTHR43221:SF1">
    <property type="entry name" value="PROTEASE HTPX"/>
    <property type="match status" value="1"/>
</dbReference>
<dbReference type="Pfam" id="PF01435">
    <property type="entry name" value="Peptidase_M48"/>
    <property type="match status" value="1"/>
</dbReference>
<proteinExistence type="inferred from homology"/>
<comment type="cofactor">
    <cofactor evidence="1">
        <name>Zn(2+)</name>
        <dbReference type="ChEBI" id="CHEBI:29105"/>
    </cofactor>
    <text evidence="1">Binds 1 zinc ion per subunit.</text>
</comment>
<comment type="subcellular location">
    <subcellularLocation>
        <location evidence="1">Cell inner membrane</location>
        <topology evidence="1">Multi-pass membrane protein</topology>
    </subcellularLocation>
</comment>
<comment type="similarity">
    <text evidence="1">Belongs to the peptidase M48B family.</text>
</comment>
<sequence length="285" mass="30929">MFNWVKTAMLMAAITALFIVIGGMIGGSRGMTIALLIALGMNFFSYWFSDKMVLRMYNAQEVDEATAPQFYRMVRELATRANLPMPRVYLIDENQPNAFATGRNPEHAAVAATTGILRVLSEREMRGVMAHELAHVKHRDILISTISATMAGAISALANFAMFFGGRDENGRPANPIAGIAVALLAPIAGALIQMAISRAREFEADRGGAQISGDPQALASALDKIHRYASGIPFQTAEEHPATAQMMIMNPLSGGGLQNLFSTHPATEERIARLMDMARTGRFD</sequence>
<reference key="1">
    <citation type="journal article" date="2004" name="Proc. Natl. Acad. Sci. U.S.A.">
        <title>Genomic plasticity of the causative agent of melioidosis, Burkholderia pseudomallei.</title>
        <authorList>
            <person name="Holden M.T.G."/>
            <person name="Titball R.W."/>
            <person name="Peacock S.J."/>
            <person name="Cerdeno-Tarraga A.-M."/>
            <person name="Atkins T."/>
            <person name="Crossman L.C."/>
            <person name="Pitt T."/>
            <person name="Churcher C."/>
            <person name="Mungall K.L."/>
            <person name="Bentley S.D."/>
            <person name="Sebaihia M."/>
            <person name="Thomson N.R."/>
            <person name="Bason N."/>
            <person name="Beacham I.R."/>
            <person name="Brooks K."/>
            <person name="Brown K.A."/>
            <person name="Brown N.F."/>
            <person name="Challis G.L."/>
            <person name="Cherevach I."/>
            <person name="Chillingworth T."/>
            <person name="Cronin A."/>
            <person name="Crossett B."/>
            <person name="Davis P."/>
            <person name="DeShazer D."/>
            <person name="Feltwell T."/>
            <person name="Fraser A."/>
            <person name="Hance Z."/>
            <person name="Hauser H."/>
            <person name="Holroyd S."/>
            <person name="Jagels K."/>
            <person name="Keith K.E."/>
            <person name="Maddison M."/>
            <person name="Moule S."/>
            <person name="Price C."/>
            <person name="Quail M.A."/>
            <person name="Rabbinowitsch E."/>
            <person name="Rutherford K."/>
            <person name="Sanders M."/>
            <person name="Simmonds M."/>
            <person name="Songsivilai S."/>
            <person name="Stevens K."/>
            <person name="Tumapa S."/>
            <person name="Vesaratchavest M."/>
            <person name="Whitehead S."/>
            <person name="Yeats C."/>
            <person name="Barrell B.G."/>
            <person name="Oyston P.C.F."/>
            <person name="Parkhill J."/>
        </authorList>
    </citation>
    <scope>NUCLEOTIDE SEQUENCE [LARGE SCALE GENOMIC DNA]</scope>
    <source>
        <strain>K96243</strain>
    </source>
</reference>
<name>HTPX_BURPS</name>
<evidence type="ECO:0000255" key="1">
    <source>
        <dbReference type="HAMAP-Rule" id="MF_00188"/>
    </source>
</evidence>
<keyword id="KW-0997">Cell inner membrane</keyword>
<keyword id="KW-1003">Cell membrane</keyword>
<keyword id="KW-0378">Hydrolase</keyword>
<keyword id="KW-0472">Membrane</keyword>
<keyword id="KW-0479">Metal-binding</keyword>
<keyword id="KW-0482">Metalloprotease</keyword>
<keyword id="KW-0645">Protease</keyword>
<keyword id="KW-1185">Reference proteome</keyword>
<keyword id="KW-0812">Transmembrane</keyword>
<keyword id="KW-1133">Transmembrane helix</keyword>
<keyword id="KW-0862">Zinc</keyword>
<protein>
    <recommendedName>
        <fullName evidence="1">Protease HtpX homolog</fullName>
        <ecNumber evidence="1">3.4.24.-</ecNumber>
    </recommendedName>
</protein>